<evidence type="ECO:0000250" key="1">
    <source>
        <dbReference type="UniProtKB" id="P08637"/>
    </source>
</evidence>
<evidence type="ECO:0000255" key="2"/>
<evidence type="ECO:0000255" key="3">
    <source>
        <dbReference type="PROSITE-ProRule" id="PRU00114"/>
    </source>
</evidence>
<evidence type="ECO:0000269" key="4">
    <source>
    </source>
</evidence>
<evidence type="ECO:0000269" key="5">
    <source>
    </source>
</evidence>
<evidence type="ECO:0000269" key="6">
    <source>
    </source>
</evidence>
<evidence type="ECO:0000269" key="7">
    <source ref="2"/>
</evidence>
<evidence type="ECO:0000303" key="8">
    <source>
    </source>
</evidence>
<evidence type="ECO:0000303" key="9">
    <source>
    </source>
</evidence>
<evidence type="ECO:0000303" key="10">
    <source ref="2"/>
</evidence>
<evidence type="ECO:0000305" key="11"/>
<evidence type="ECO:0007829" key="12">
    <source>
        <dbReference type="PDB" id="6MJO"/>
    </source>
</evidence>
<evidence type="ECO:0007829" key="13">
    <source>
        <dbReference type="PDB" id="7KCZ"/>
    </source>
</evidence>
<protein>
    <recommendedName>
        <fullName evidence="1">Low affinity immunoglobulin gamma Fc region receptor III-A</fullName>
        <shortName>IgG Fc receptor III-A</shortName>
    </recommendedName>
    <alternativeName>
        <fullName>Fc-gamma RIII-alpha</fullName>
        <shortName>Fc-gamma RIII</shortName>
        <shortName>Fc-gamma RIIIa</shortName>
        <shortName evidence="10">FcgammaRIIIa</shortName>
    </alternativeName>
    <cdAntigenName evidence="10">CD16a</cdAntigenName>
</protein>
<reference key="1">
    <citation type="journal article" date="2006" name="J. Immunol.">
        <title>IgG Fc receptor III homologues in nonhuman primate species: genetic characterization and ligand interactions.</title>
        <authorList>
            <person name="Rogers K.A."/>
            <person name="Scinicariello F."/>
            <person name="Attanasio R."/>
        </authorList>
    </citation>
    <scope>NUCLEOTIDE SEQUENCE [MRNA] (ISOFORMS 1 AND 2)</scope>
    <scope>TISSUE SPECIFICITY</scope>
    <scope>VARIANTS MET-229 AND ILE-233</scope>
    <source>
        <tissue>Blood</tissue>
    </source>
</reference>
<reference key="2">
    <citation type="submission" date="2007-01" db="EMBL/GenBank/DDBJ databases">
        <title>Macaca mulatta FcgammaRIIIa (CD16a)(FCGR3A) mRNA in rituxan-treated animals.</title>
        <authorList>
            <person name="Miller C.J."/>
            <person name="Dutra J.C."/>
        </authorList>
    </citation>
    <scope>NUCLEOTIDE SEQUENCE [MRNA] (ISOFORMS 1 AND 3)</scope>
    <scope>VARIANTS MET-229 AND ILE-233</scope>
</reference>
<reference key="3">
    <citation type="journal article" date="1994" name="Bull. World Health Organ.">
        <title>Nomenclature of Fc receptors. IUIS/WHO Subcommittee on Nomenclature of Fc receptors.</title>
        <authorList>
            <person name="Conrad D."/>
            <person name="Cooper M."/>
            <person name="Fridman W.H."/>
            <person name="Kinet J.P."/>
            <person name="Ravetch J."/>
        </authorList>
    </citation>
    <scope>NOMENCLATURE</scope>
</reference>
<reference key="4">
    <citation type="journal article" date="2020" name="J. Immunol.">
        <title>Functional Interactions of Common Allotypes of Rhesus Macaque FcgammaR2A and FcgammaR3A with Human and Macaque IgG Subclasses.</title>
        <authorList>
            <person name="Grunst M.W."/>
            <person name="Grandea A.G. III"/>
            <person name="Janaka S.K."/>
            <person name="Hammad I."/>
            <person name="Grimes P."/>
            <person name="Karl J.A."/>
            <person name="Wiseman R."/>
            <person name="O'Connor D.H."/>
            <person name="Evans D.T."/>
        </authorList>
    </citation>
    <scope>FUNCTION</scope>
    <scope>SUBCELLULAR LOCATION</scope>
    <scope>POLYMORPHISM</scope>
</reference>
<reference key="5">
    <citation type="journal article" date="2021" name="Antib Ther">
        <title>Cross-species higher sensitivities of FcgammaRIIIA/FcgammaRIV to afucosylated IgG for enhanced ADCC.</title>
        <authorList>
            <person name="Mao C."/>
            <person name="Near R."/>
            <person name="Zhong X."/>
            <person name="Gao W."/>
        </authorList>
    </citation>
    <scope>FUNCTION</scope>
</reference>
<sequence length="254" mass="29005">MWQLLLPTALLLLVSAGMRAEDLPKAVVFLEPQWYRVLEKDSVTLKCQGAYSPEDNSTRWFHNESLISSQTSSYFIAAARVNNSGEYRCQTSLSTLSDPVQLEVHIGWLLLQAPRWVFKEEESIHLRCHSWKNTLLHKVTYLQNGKGRKYFHQNSDFYIPKATLKDSGSYFCRGLIGSKNVSSETVNITITQDLAVSSISSFFPPGYQVSFCLVMVLLFAVDTGLYFSVKKSVPSSTRDWEDHKFKWSKDPQDK</sequence>
<keyword id="KW-0002">3D-structure</keyword>
<keyword id="KW-0025">Alternative splicing</keyword>
<keyword id="KW-1003">Cell membrane</keyword>
<keyword id="KW-1015">Disulfide bond</keyword>
<keyword id="KW-0325">Glycoprotein</keyword>
<keyword id="KW-0390">IgG-binding protein</keyword>
<keyword id="KW-0391">Immunity</keyword>
<keyword id="KW-0393">Immunoglobulin domain</keyword>
<keyword id="KW-0472">Membrane</keyword>
<keyword id="KW-0675">Receptor</keyword>
<keyword id="KW-1185">Reference proteome</keyword>
<keyword id="KW-0677">Repeat</keyword>
<keyword id="KW-0964">Secreted</keyword>
<keyword id="KW-0732">Signal</keyword>
<keyword id="KW-0812">Transmembrane</keyword>
<keyword id="KW-1133">Transmembrane helix</keyword>
<comment type="function">
    <text evidence="1 5 6">Receptor for the invariable Fc fragment of immunoglobulin gamma (IgG). Optimally activated upon binding of clustered antigen-IgG complexes displayed on cell surfaces, triggers lysis of antibody-coated cells, a process known as antibody-dependent cellular cytotoxicity (ADCC). Does not bind free monomeric IgG, thus avoiding inappropriate effector cell activation in the absence of antigenic trigger (PubMed:33208458). Mediates IgG effector functions on natural killer (NK) cells. Binds antigen-IgG complexes generated upon infection and triggers NK cell-dependent cytokine production and degranulation to limit viral load and propagation. Involved in the generation of memory-like adaptive NK cells capable to produce high amounts of IFNG and to efficiently eliminate virus-infected cells via ADCC. Regulates NK cell survival and proliferation, in particular by preventing NK cell progenitor apoptosis (By similarity). Fc-binding subunit that associates with CD247 and/or FCER1G adapters to form functional signaling complexes. Following the engagement of antigen-IgG complexes, triggers phosphorylation of immunoreceptor tyrosine-based activation motif (ITAM)-containing adapters with subsequent activation of phosphatidylinositol 3-kinase signaling and sustained elevation of intracellular calcium that ultimately drive NK cell activation. The ITAM-dependent signaling coupled to receptor phosphorylation by PKC mediates robust intracellular calcium flux that leads to production of pro-inflammatory cytokines, whereas in the absence of receptor phosphorylation it mainly activates phosphatidylinositol 3-kinase signaling leading to cell degranulation (By similarity). Costimulates NK cells and trigger lysis of target cells independently of IgG binding (By similarity). Mediates the antitumor activities of therapeutic antibodies. Upon ligation on monocytes triggers TNFA-dependent ADCC of IgG-coated tumor cells (By similarity). Mediates enhanced ADCC in response to afucosylated IgGs (PubMed:34485821).</text>
</comment>
<comment type="subunit">
    <text evidence="1">Forms a heterooligomeric complex with ITAM-containing signaling subunits, either a homodimer of CD247, a homodimer of FCER1G or a heterodimer of CD247 and FCER1G, to form a functional receptor complex. Interacts (via transmembrane domain) with signaling subunits; this interaction is a prerequisite for receptor complex expression on the cell surface and intracellular signal transduction. Binds the Fc region of antigen-complexed IgG with a preference for IgG1 and IgG3 isotypes (By similarity). Interacts with CD2; this interaction is involved in NK cell activation and cytotoxicity (By similarity). Interacts with S100A4; this interaction inhibits PKC-dependent phosphorylation of FCGR3A (By similarity).</text>
</comment>
<comment type="subcellular location">
    <subcellularLocation>
        <location evidence="5">Cell membrane</location>
        <topology evidence="2">Single-pass type I membrane protein</topology>
    </subcellularLocation>
    <subcellularLocation>
        <location evidence="1">Secreted</location>
    </subcellularLocation>
    <text evidence="1">Also exists as a soluble receptor.</text>
</comment>
<comment type="alternative products">
    <event type="alternative splicing"/>
    <isoform>
        <id>A3RFZ7-1</id>
        <name>1</name>
        <sequence type="displayed"/>
    </isoform>
    <isoform>
        <id>A3RFZ7-2</id>
        <name>2</name>
        <sequence type="described" ref="VSP_037763"/>
    </isoform>
    <isoform>
        <id>A3RFZ7-3</id>
        <name>3</name>
        <sequence type="described" ref="VSP_037764"/>
    </isoform>
</comment>
<comment type="tissue specificity">
    <text evidence="4">Lymphocytes and monocytes.</text>
</comment>
<comment type="PTM">
    <text evidence="1">Glycosylated. Glycosylation plays an inhibitory role in the interaction with IgG1 and IgG2.</text>
</comment>
<comment type="PTM">
    <text evidence="1">Undergoes rapid ectodomain shedding upon NK cell stimulation. The soluble form is produced by a proteolytic cleavage mediated by ADAM17. Repeated stimulation causes receptor shedding, a mechanism that allows for increased NK cell motility and detachment from opsonized target cells while avoiding activation-induced NK cell apoptosis.</text>
</comment>
<comment type="polymorphism">
    <text evidence="5">Three common alleles are identified in Indian-origin rhesus macaques: 3A:01, 3A:02 and 3A:03. These alleles display similar IgG responses.</text>
</comment>
<comment type="sequence caution" evidence="11">
    <conflict type="erroneous initiation">
        <sequence resource="EMBL-CDS" id="ABN69099"/>
    </conflict>
</comment>
<comment type="sequence caution" evidence="11">
    <conflict type="erroneous initiation">
        <sequence resource="EMBL-CDS" id="ABN69100"/>
    </conflict>
</comment>
<comment type="sequence caution" evidence="11">
    <conflict type="erroneous initiation">
        <sequence resource="EMBL-CDS" id="ABN69101"/>
    </conflict>
</comment>
<comment type="sequence caution" evidence="11">
    <conflict type="erroneous initiation">
        <sequence resource="EMBL-CDS" id="ABN69103"/>
    </conflict>
</comment>
<comment type="sequence caution" evidence="11">
    <conflict type="erroneous initiation">
        <sequence resource="EMBL-CDS" id="ABN69104"/>
    </conflict>
</comment>
<proteinExistence type="evidence at protein level"/>
<feature type="signal peptide" evidence="2">
    <location>
        <begin position="1"/>
        <end position="20"/>
    </location>
</feature>
<feature type="chain" id="PRO_0000379977" description="Low affinity immunoglobulin gamma Fc region receptor III-A">
    <location>
        <begin position="21"/>
        <end position="254"/>
    </location>
</feature>
<feature type="topological domain" description="Extracellular" evidence="2">
    <location>
        <begin position="21"/>
        <end position="206"/>
    </location>
</feature>
<feature type="transmembrane region" description="Helical" evidence="2">
    <location>
        <begin position="207"/>
        <end position="229"/>
    </location>
</feature>
<feature type="topological domain" description="Cytoplasmic" evidence="2">
    <location>
        <begin position="230"/>
        <end position="254"/>
    </location>
</feature>
<feature type="domain" description="Ig-like C2-type 1">
    <location>
        <begin position="24"/>
        <end position="105"/>
    </location>
</feature>
<feature type="domain" description="Ig-like C2-type 2">
    <location>
        <begin position="107"/>
        <end position="189"/>
    </location>
</feature>
<feature type="site" description="Cleavage; by ADAM17" evidence="1">
    <location>
        <begin position="195"/>
        <end position="196"/>
    </location>
</feature>
<feature type="site" description="Important for receptor turnover" evidence="1">
    <location>
        <position position="222"/>
    </location>
</feature>
<feature type="glycosylation site" description="N-linked (GlcNAc...) asparagine" evidence="2">
    <location>
        <position position="187"/>
    </location>
</feature>
<feature type="disulfide bond" evidence="3">
    <location>
        <begin position="47"/>
        <end position="89"/>
    </location>
</feature>
<feature type="disulfide bond" evidence="3">
    <location>
        <begin position="128"/>
        <end position="172"/>
    </location>
</feature>
<feature type="splice variant" id="VSP_037763" description="In isoform 2." evidence="8">
    <location>
        <begin position="14"/>
        <end position="20"/>
    </location>
</feature>
<feature type="splice variant" id="VSP_037764" description="In isoform 3." evidence="10">
    <location>
        <position position="21"/>
    </location>
</feature>
<feature type="sequence variant">
    <original>A</original>
    <variation>S</variation>
    <location>
        <position position="26"/>
    </location>
</feature>
<feature type="sequence variant" evidence="4 7">
    <original>V</original>
    <variation>M</variation>
    <location>
        <position position="229"/>
    </location>
</feature>
<feature type="sequence variant" evidence="4 7">
    <original>V</original>
    <variation>I</variation>
    <location>
        <position position="233"/>
    </location>
</feature>
<feature type="strand" evidence="12">
    <location>
        <begin position="27"/>
        <end position="32"/>
    </location>
</feature>
<feature type="strand" evidence="12">
    <location>
        <begin position="35"/>
        <end position="38"/>
    </location>
</feature>
<feature type="strand" evidence="12">
    <location>
        <begin position="43"/>
        <end position="48"/>
    </location>
</feature>
<feature type="strand" evidence="13">
    <location>
        <begin position="53"/>
        <end position="55"/>
    </location>
</feature>
<feature type="strand" evidence="12">
    <location>
        <begin position="58"/>
        <end position="62"/>
    </location>
</feature>
<feature type="strand" evidence="12">
    <location>
        <begin position="71"/>
        <end position="78"/>
    </location>
</feature>
<feature type="helix" evidence="12">
    <location>
        <begin position="81"/>
        <end position="83"/>
    </location>
</feature>
<feature type="strand" evidence="12">
    <location>
        <begin position="85"/>
        <end position="91"/>
    </location>
</feature>
<feature type="strand" evidence="13">
    <location>
        <begin position="92"/>
        <end position="94"/>
    </location>
</feature>
<feature type="strand" evidence="12">
    <location>
        <begin position="100"/>
        <end position="105"/>
    </location>
</feature>
<feature type="strand" evidence="12">
    <location>
        <begin position="107"/>
        <end position="112"/>
    </location>
</feature>
<feature type="strand" evidence="12">
    <location>
        <begin position="116"/>
        <end position="119"/>
    </location>
</feature>
<feature type="strand" evidence="12">
    <location>
        <begin position="124"/>
        <end position="130"/>
    </location>
</feature>
<feature type="helix" evidence="12">
    <location>
        <begin position="131"/>
        <end position="133"/>
    </location>
</feature>
<feature type="strand" evidence="12">
    <location>
        <begin position="136"/>
        <end position="143"/>
    </location>
</feature>
<feature type="strand" evidence="12">
    <location>
        <begin position="146"/>
        <end position="153"/>
    </location>
</feature>
<feature type="strand" evidence="12">
    <location>
        <begin position="157"/>
        <end position="161"/>
    </location>
</feature>
<feature type="helix" evidence="12">
    <location>
        <begin position="164"/>
        <end position="166"/>
    </location>
</feature>
<feature type="strand" evidence="12">
    <location>
        <begin position="168"/>
        <end position="176"/>
    </location>
</feature>
<feature type="strand" evidence="12">
    <location>
        <begin position="179"/>
        <end position="182"/>
    </location>
</feature>
<feature type="strand" evidence="12">
    <location>
        <begin position="186"/>
        <end position="191"/>
    </location>
</feature>
<accession>A3RFZ7</accession>
<accession>A3RFZ3</accession>
<accession>A3RFZ4</accession>
<accession>A3RFZ5</accession>
<accession>A3RFZ6</accession>
<accession>A3RFZ8</accession>
<accession>A3RFZ9</accession>
<accession>Q09TM0</accession>
<accession>Q09TM1</accession>
<organism>
    <name type="scientific">Macaca mulatta</name>
    <name type="common">Rhesus macaque</name>
    <dbReference type="NCBI Taxonomy" id="9544"/>
    <lineage>
        <taxon>Eukaryota</taxon>
        <taxon>Metazoa</taxon>
        <taxon>Chordata</taxon>
        <taxon>Craniata</taxon>
        <taxon>Vertebrata</taxon>
        <taxon>Euteleostomi</taxon>
        <taxon>Mammalia</taxon>
        <taxon>Eutheria</taxon>
        <taxon>Euarchontoglires</taxon>
        <taxon>Primates</taxon>
        <taxon>Haplorrhini</taxon>
        <taxon>Catarrhini</taxon>
        <taxon>Cercopithecidae</taxon>
        <taxon>Cercopithecinae</taxon>
        <taxon>Macaca</taxon>
    </lineage>
</organism>
<gene>
    <name evidence="9 10" type="primary">FCGR3A</name>
    <name type="synonym">FCGR3</name>
</gene>
<dbReference type="EMBL" id="DQ423379">
    <property type="protein sequence ID" value="ABD83659.1"/>
    <property type="molecule type" value="mRNA"/>
</dbReference>
<dbReference type="EMBL" id="DQ423380">
    <property type="protein sequence ID" value="ABD83660.1"/>
    <property type="molecule type" value="mRNA"/>
</dbReference>
<dbReference type="EMBL" id="EF396932">
    <property type="protein sequence ID" value="ABN69096.1"/>
    <property type="molecule type" value="mRNA"/>
</dbReference>
<dbReference type="EMBL" id="EF396933">
    <property type="protein sequence ID" value="ABN69097.1"/>
    <property type="molecule type" value="mRNA"/>
</dbReference>
<dbReference type="EMBL" id="EF396934">
    <property type="protein sequence ID" value="ABN69098.1"/>
    <property type="molecule type" value="mRNA"/>
</dbReference>
<dbReference type="EMBL" id="EF396935">
    <property type="protein sequence ID" value="ABN69099.1"/>
    <property type="status" value="ALT_INIT"/>
    <property type="molecule type" value="mRNA"/>
</dbReference>
<dbReference type="EMBL" id="EF396936">
    <property type="protein sequence ID" value="ABN69100.1"/>
    <property type="status" value="ALT_INIT"/>
    <property type="molecule type" value="mRNA"/>
</dbReference>
<dbReference type="EMBL" id="EF396937">
    <property type="protein sequence ID" value="ABN69101.1"/>
    <property type="status" value="ALT_INIT"/>
    <property type="molecule type" value="mRNA"/>
</dbReference>
<dbReference type="EMBL" id="EF396938">
    <property type="protein sequence ID" value="ABN69102.1"/>
    <property type="molecule type" value="mRNA"/>
</dbReference>
<dbReference type="EMBL" id="EF396939">
    <property type="protein sequence ID" value="ABN69103.1"/>
    <property type="status" value="ALT_INIT"/>
    <property type="molecule type" value="mRNA"/>
</dbReference>
<dbReference type="EMBL" id="EF396940">
    <property type="protein sequence ID" value="ABN69104.1"/>
    <property type="status" value="ALT_INIT"/>
    <property type="molecule type" value="mRNA"/>
</dbReference>
<dbReference type="RefSeq" id="NP_001041713.1">
    <property type="nucleotide sequence ID" value="NM_001048248.1"/>
</dbReference>
<dbReference type="RefSeq" id="NP_001258582.1">
    <property type="nucleotide sequence ID" value="NM_001271653.1"/>
</dbReference>
<dbReference type="RefSeq" id="NP_001258583.1">
    <property type="nucleotide sequence ID" value="NM_001271654.1"/>
</dbReference>
<dbReference type="RefSeq" id="NP_001258584.1">
    <property type="nucleotide sequence ID" value="NM_001271655.1"/>
</dbReference>
<dbReference type="RefSeq" id="NP_001258585.1">
    <property type="nucleotide sequence ID" value="NM_001271656.1"/>
</dbReference>
<dbReference type="RefSeq" id="NP_001258586.1">
    <property type="nucleotide sequence ID" value="NM_001271657.1"/>
</dbReference>
<dbReference type="RefSeq" id="XP_014968657.1">
    <molecule id="A3RFZ7-3"/>
    <property type="nucleotide sequence ID" value="XM_015113171.1"/>
</dbReference>
<dbReference type="RefSeq" id="XP_014968661.1">
    <molecule id="A3RFZ7-1"/>
    <property type="nucleotide sequence ID" value="XM_015113175.1"/>
</dbReference>
<dbReference type="PDB" id="6MJ3">
    <property type="method" value="X-ray"/>
    <property type="resolution" value="3.80 A"/>
    <property type="chains" value="C/F=18-209"/>
</dbReference>
<dbReference type="PDB" id="6MJO">
    <property type="method" value="X-ray"/>
    <property type="resolution" value="1.90 A"/>
    <property type="chains" value="C=18-209"/>
</dbReference>
<dbReference type="PDB" id="7KCZ">
    <property type="method" value="X-ray"/>
    <property type="resolution" value="3.15 A"/>
    <property type="chains" value="C/F=18-209"/>
</dbReference>
<dbReference type="PDBsum" id="6MJ3"/>
<dbReference type="PDBsum" id="6MJO"/>
<dbReference type="PDBsum" id="7KCZ"/>
<dbReference type="SMR" id="A3RFZ7"/>
<dbReference type="FunCoup" id="A3RFZ7">
    <property type="interactions" value="340"/>
</dbReference>
<dbReference type="STRING" id="9544.ENSMMUP00000049334"/>
<dbReference type="GlyCosmos" id="A3RFZ7">
    <property type="glycosylation" value="1 site, No reported glycans"/>
</dbReference>
<dbReference type="PaxDb" id="9544-ENSMMUP00000021295"/>
<dbReference type="Ensembl" id="ENSMMUT00000022769.4">
    <molecule id="A3RFZ7-2"/>
    <property type="protein sequence ID" value="ENSMMUP00000021295.4"/>
    <property type="gene ID" value="ENSMMUG00000016206.4"/>
</dbReference>
<dbReference type="GeneID" id="720006"/>
<dbReference type="KEGG" id="mcc:720006"/>
<dbReference type="CTD" id="14131"/>
<dbReference type="VEuPathDB" id="HostDB:ENSMMUG00000016206"/>
<dbReference type="eggNOG" id="ENOG502RU1M">
    <property type="taxonomic scope" value="Eukaryota"/>
</dbReference>
<dbReference type="GeneTree" id="ENSGT01050000244808"/>
<dbReference type="InParanoid" id="A3RFZ7"/>
<dbReference type="OrthoDB" id="8917564at2759"/>
<dbReference type="Proteomes" id="UP000006718">
    <property type="component" value="Chromosome 1"/>
</dbReference>
<dbReference type="Bgee" id="ENSMMUG00000016206">
    <property type="expression patterns" value="Expressed in spleen and 20 other cell types or tissues"/>
</dbReference>
<dbReference type="ExpressionAtlas" id="A3RFZ7">
    <property type="expression patterns" value="baseline"/>
</dbReference>
<dbReference type="GO" id="GO:0009897">
    <property type="term" value="C:external side of plasma membrane"/>
    <property type="evidence" value="ECO:0000318"/>
    <property type="project" value="GO_Central"/>
</dbReference>
<dbReference type="GO" id="GO:0005615">
    <property type="term" value="C:extracellular space"/>
    <property type="evidence" value="ECO:0000250"/>
    <property type="project" value="UniProtKB"/>
</dbReference>
<dbReference type="GO" id="GO:0005886">
    <property type="term" value="C:plasma membrane"/>
    <property type="evidence" value="ECO:0000250"/>
    <property type="project" value="UniProtKB"/>
</dbReference>
<dbReference type="GO" id="GO:0019864">
    <property type="term" value="F:IgG binding"/>
    <property type="evidence" value="ECO:0007669"/>
    <property type="project" value="UniProtKB-KW"/>
</dbReference>
<dbReference type="GO" id="GO:0019770">
    <property type="term" value="F:IgG receptor activity"/>
    <property type="evidence" value="ECO:0000314"/>
    <property type="project" value="UniProtKB"/>
</dbReference>
<dbReference type="GO" id="GO:0001788">
    <property type="term" value="P:antibody-dependent cellular cytotoxicity"/>
    <property type="evidence" value="ECO:0000314"/>
    <property type="project" value="UniProtKB"/>
</dbReference>
<dbReference type="GO" id="GO:0019722">
    <property type="term" value="P:calcium-mediated signaling"/>
    <property type="evidence" value="ECO:0000250"/>
    <property type="project" value="UniProtKB"/>
</dbReference>
<dbReference type="GO" id="GO:0007166">
    <property type="term" value="P:cell surface receptor signaling pathway"/>
    <property type="evidence" value="ECO:0000318"/>
    <property type="project" value="GO_Central"/>
</dbReference>
<dbReference type="GO" id="GO:0038094">
    <property type="term" value="P:Fc-gamma receptor signaling pathway"/>
    <property type="evidence" value="ECO:0000250"/>
    <property type="project" value="UniProtKB"/>
</dbReference>
<dbReference type="GO" id="GO:0030101">
    <property type="term" value="P:natural killer cell activation"/>
    <property type="evidence" value="ECO:0000250"/>
    <property type="project" value="UniProtKB"/>
</dbReference>
<dbReference type="GO" id="GO:0043320">
    <property type="term" value="P:natural killer cell degranulation"/>
    <property type="evidence" value="ECO:0000250"/>
    <property type="project" value="UniProtKB"/>
</dbReference>
<dbReference type="GO" id="GO:0042267">
    <property type="term" value="P:natural killer cell mediated cytotoxicity"/>
    <property type="evidence" value="ECO:0000250"/>
    <property type="project" value="UniProtKB"/>
</dbReference>
<dbReference type="GO" id="GO:0043491">
    <property type="term" value="P:phosphatidylinositol 3-kinase/protein kinase B signal transduction"/>
    <property type="evidence" value="ECO:0000250"/>
    <property type="project" value="UniProtKB"/>
</dbReference>
<dbReference type="CDD" id="cd05752">
    <property type="entry name" value="Ig1_FcgammaR_like"/>
    <property type="match status" value="1"/>
</dbReference>
<dbReference type="CDD" id="cd05753">
    <property type="entry name" value="Ig2_FcgammaR_like"/>
    <property type="match status" value="1"/>
</dbReference>
<dbReference type="FunFam" id="2.60.40.10:FF:000217">
    <property type="entry name" value="High affinity immunoglobulin gamma Fc receptor I"/>
    <property type="match status" value="1"/>
</dbReference>
<dbReference type="FunFam" id="2.60.40.10:FF:000356">
    <property type="entry name" value="Low affinity immunoglobulin gamma Fc region receptor III-A"/>
    <property type="match status" value="1"/>
</dbReference>
<dbReference type="Gene3D" id="2.60.40.10">
    <property type="entry name" value="Immunoglobulins"/>
    <property type="match status" value="2"/>
</dbReference>
<dbReference type="InterPro" id="IPR007110">
    <property type="entry name" value="Ig-like_dom"/>
</dbReference>
<dbReference type="InterPro" id="IPR036179">
    <property type="entry name" value="Ig-like_dom_sf"/>
</dbReference>
<dbReference type="InterPro" id="IPR013783">
    <property type="entry name" value="Ig-like_fold"/>
</dbReference>
<dbReference type="InterPro" id="IPR050488">
    <property type="entry name" value="Ig_Fc_receptor"/>
</dbReference>
<dbReference type="InterPro" id="IPR003599">
    <property type="entry name" value="Ig_sub"/>
</dbReference>
<dbReference type="PANTHER" id="PTHR11481">
    <property type="entry name" value="IMMUNOGLOBULIN FC RECEPTOR"/>
    <property type="match status" value="1"/>
</dbReference>
<dbReference type="PANTHER" id="PTHR11481:SF103">
    <property type="entry name" value="LOW AFFINITY IMMUNOGLOBULIN GAMMA FC REGION RECEPTOR III-A-RELATED"/>
    <property type="match status" value="1"/>
</dbReference>
<dbReference type="Pfam" id="PF13895">
    <property type="entry name" value="Ig_2"/>
    <property type="match status" value="2"/>
</dbReference>
<dbReference type="SMART" id="SM00409">
    <property type="entry name" value="IG"/>
    <property type="match status" value="2"/>
</dbReference>
<dbReference type="SUPFAM" id="SSF48726">
    <property type="entry name" value="Immunoglobulin"/>
    <property type="match status" value="2"/>
</dbReference>
<dbReference type="PROSITE" id="PS50835">
    <property type="entry name" value="IG_LIKE"/>
    <property type="match status" value="2"/>
</dbReference>
<name>FCG3A_MACMU</name>